<feature type="chain" id="PRO_0000322255" description="Prefoldin subunit alpha">
    <location>
        <begin position="1"/>
        <end position="153"/>
    </location>
</feature>
<feature type="region of interest" description="Disordered" evidence="2">
    <location>
        <begin position="126"/>
        <end position="153"/>
    </location>
</feature>
<feature type="compositionally biased region" description="Basic and acidic residues" evidence="2">
    <location>
        <begin position="143"/>
        <end position="153"/>
    </location>
</feature>
<comment type="function">
    <text evidence="1">Molecular chaperone capable of stabilizing a range of proteins. Seems to fulfill an ATP-independent, HSP70-like function in archaeal de novo protein folding.</text>
</comment>
<comment type="subunit">
    <text evidence="1">Heterohexamer of two alpha and four beta subunits.</text>
</comment>
<comment type="subcellular location">
    <subcellularLocation>
        <location evidence="1">Cytoplasm</location>
    </subcellularLocation>
</comment>
<comment type="similarity">
    <text evidence="1">Belongs to the prefoldin alpha subunit family.</text>
</comment>
<comment type="sequence caution" evidence="3">
    <conflict type="erroneous initiation">
        <sequence resource="EMBL-CDS" id="ABS56394"/>
    </conflict>
</comment>
<keyword id="KW-0143">Chaperone</keyword>
<keyword id="KW-0963">Cytoplasm</keyword>
<keyword id="KW-1185">Reference proteome</keyword>
<protein>
    <recommendedName>
        <fullName evidence="1">Prefoldin subunit alpha</fullName>
    </recommendedName>
    <alternativeName>
        <fullName evidence="1">GimC subunit alpha</fullName>
    </alternativeName>
</protein>
<name>PFDA_METB6</name>
<proteinExistence type="inferred from homology"/>
<evidence type="ECO:0000255" key="1">
    <source>
        <dbReference type="HAMAP-Rule" id="MF_00308"/>
    </source>
</evidence>
<evidence type="ECO:0000256" key="2">
    <source>
        <dbReference type="SAM" id="MobiDB-lite"/>
    </source>
</evidence>
<evidence type="ECO:0000305" key="3"/>
<accession>A7I9I3</accession>
<organism>
    <name type="scientific">Methanoregula boonei (strain DSM 21154 / JCM 14090 / 6A8)</name>
    <dbReference type="NCBI Taxonomy" id="456442"/>
    <lineage>
        <taxon>Archaea</taxon>
        <taxon>Methanobacteriati</taxon>
        <taxon>Methanobacteriota</taxon>
        <taxon>Stenosarchaea group</taxon>
        <taxon>Methanomicrobia</taxon>
        <taxon>Methanomicrobiales</taxon>
        <taxon>Methanoregulaceae</taxon>
        <taxon>Methanoregula</taxon>
    </lineage>
</organism>
<sequence>MDQNEIETLQYYLKEYGQQAEVFAGQLELMENGRMEALAAIEALEALATSEDGTVLLQIGGGASLRAKVLEPEKVLLNIGSEVIVEKTSVDAIEYLKDRITELEASQKKVSEALEKLRAQTNEIAKRLEQGYRQAPGGSPVPHRHDHEDHDEE</sequence>
<gene>
    <name evidence="1" type="primary">pfdA</name>
    <name type="ordered locus">Mboo_1879</name>
</gene>
<dbReference type="EMBL" id="CP000780">
    <property type="protein sequence ID" value="ABS56394.1"/>
    <property type="status" value="ALT_INIT"/>
    <property type="molecule type" value="Genomic_DNA"/>
</dbReference>
<dbReference type="SMR" id="A7I9I3"/>
<dbReference type="STRING" id="456442.Mboo_1879"/>
<dbReference type="KEGG" id="mbn:Mboo_1879"/>
<dbReference type="eggNOG" id="arCOG01341">
    <property type="taxonomic scope" value="Archaea"/>
</dbReference>
<dbReference type="HOGENOM" id="CLU_091867_1_3_2"/>
<dbReference type="Proteomes" id="UP000002408">
    <property type="component" value="Chromosome"/>
</dbReference>
<dbReference type="GO" id="GO:0005737">
    <property type="term" value="C:cytoplasm"/>
    <property type="evidence" value="ECO:0007669"/>
    <property type="project" value="UniProtKB-SubCell"/>
</dbReference>
<dbReference type="GO" id="GO:0016272">
    <property type="term" value="C:prefoldin complex"/>
    <property type="evidence" value="ECO:0007669"/>
    <property type="project" value="UniProtKB-UniRule"/>
</dbReference>
<dbReference type="GO" id="GO:0051082">
    <property type="term" value="F:unfolded protein binding"/>
    <property type="evidence" value="ECO:0007669"/>
    <property type="project" value="UniProtKB-UniRule"/>
</dbReference>
<dbReference type="GO" id="GO:0006457">
    <property type="term" value="P:protein folding"/>
    <property type="evidence" value="ECO:0007669"/>
    <property type="project" value="UniProtKB-UniRule"/>
</dbReference>
<dbReference type="CDD" id="cd23160">
    <property type="entry name" value="Prefoldin_alpha_GimC"/>
    <property type="match status" value="1"/>
</dbReference>
<dbReference type="Gene3D" id="1.10.287.370">
    <property type="match status" value="1"/>
</dbReference>
<dbReference type="HAMAP" id="MF_00308">
    <property type="entry name" value="PfdA"/>
    <property type="match status" value="1"/>
</dbReference>
<dbReference type="InterPro" id="IPR011599">
    <property type="entry name" value="PFD_alpha_archaea"/>
</dbReference>
<dbReference type="InterPro" id="IPR009053">
    <property type="entry name" value="Prefoldin"/>
</dbReference>
<dbReference type="InterPro" id="IPR004127">
    <property type="entry name" value="Prefoldin_subunit_alpha"/>
</dbReference>
<dbReference type="NCBIfam" id="TIGR00293">
    <property type="entry name" value="prefoldin subunit alpha"/>
    <property type="match status" value="1"/>
</dbReference>
<dbReference type="PANTHER" id="PTHR12674">
    <property type="entry name" value="PREFOLDIN SUBUNIT 5"/>
    <property type="match status" value="1"/>
</dbReference>
<dbReference type="PANTHER" id="PTHR12674:SF2">
    <property type="entry name" value="PREFOLDIN SUBUNIT 5"/>
    <property type="match status" value="1"/>
</dbReference>
<dbReference type="Pfam" id="PF02996">
    <property type="entry name" value="Prefoldin"/>
    <property type="match status" value="1"/>
</dbReference>
<dbReference type="SUPFAM" id="SSF46579">
    <property type="entry name" value="Prefoldin"/>
    <property type="match status" value="1"/>
</dbReference>
<reference key="1">
    <citation type="journal article" date="2015" name="Microbiology">
        <title>Genome of Methanoregula boonei 6A8 reveals adaptations to oligotrophic peatland environments.</title>
        <authorList>
            <person name="Braeuer S."/>
            <person name="Cadillo-Quiroz H."/>
            <person name="Kyrpides N."/>
            <person name="Woyke T."/>
            <person name="Goodwin L."/>
            <person name="Detter C."/>
            <person name="Podell S."/>
            <person name="Yavitt J.B."/>
            <person name="Zinder S.H."/>
        </authorList>
    </citation>
    <scope>NUCLEOTIDE SEQUENCE [LARGE SCALE GENOMIC DNA]</scope>
    <source>
        <strain>DSM 21154 / JCM 14090 / 6A8</strain>
    </source>
</reference>